<feature type="chain" id="PRO_0000344217" description="Zinc finger protein 765">
    <location>
        <begin position="1"/>
        <end position="523"/>
    </location>
</feature>
<feature type="domain" description="KRAB" evidence="3">
    <location>
        <begin position="8"/>
        <end position="81"/>
    </location>
</feature>
<feature type="zinc finger region" description="C2H2-type 1; degenerate" evidence="2">
    <location>
        <begin position="215"/>
        <end position="237"/>
    </location>
</feature>
<feature type="zinc finger region" description="C2H2-type 2" evidence="2">
    <location>
        <begin position="243"/>
        <end position="265"/>
    </location>
</feature>
<feature type="zinc finger region" description="C2H2-type 3" evidence="2">
    <location>
        <begin position="271"/>
        <end position="293"/>
    </location>
</feature>
<feature type="zinc finger region" description="C2H2-type 4" evidence="2">
    <location>
        <begin position="299"/>
        <end position="321"/>
    </location>
</feature>
<feature type="zinc finger region" description="C2H2-type 5" evidence="2">
    <location>
        <begin position="327"/>
        <end position="349"/>
    </location>
</feature>
<feature type="zinc finger region" description="C2H2-type 6" evidence="2">
    <location>
        <begin position="355"/>
        <end position="377"/>
    </location>
</feature>
<feature type="zinc finger region" description="C2H2-type 7" evidence="2">
    <location>
        <begin position="383"/>
        <end position="405"/>
    </location>
</feature>
<feature type="zinc finger region" description="C2H2-type 8; atypical" evidence="2">
    <location>
        <begin position="411"/>
        <end position="432"/>
    </location>
</feature>
<feature type="zinc finger region" description="C2H2-type 9" evidence="2">
    <location>
        <begin position="438"/>
        <end position="460"/>
    </location>
</feature>
<feature type="zinc finger region" description="C2H2-type 10" evidence="2">
    <location>
        <begin position="466"/>
        <end position="488"/>
    </location>
</feature>
<feature type="zinc finger region" description="C2H2-type 11; degenerate" evidence="2">
    <location>
        <begin position="494"/>
        <end position="516"/>
    </location>
</feature>
<feature type="cross-link" description="Glycyl lysine isopeptide (Lys-Gly) (interchain with G-Cter in SUMO2)" evidence="8">
    <location>
        <position position="205"/>
    </location>
</feature>
<feature type="splice variant" id="VSP_055629" description="In isoform 3." evidence="7">
    <original>DISSKCMMKEFSSTAQGNREVFHAGTSQRHESHHNGDFCFQDIDKDIHDIEFQWQEDERNGHEALMTKIKKLTGSTERYD</original>
    <variation>EFWSVIPAKVQWCHLRSLQPPLPRFKQFSCLSLPSTWDYRYLFQMHVEDVVVNRARQYRSDPHRDIAQTSKSSHWRILFP</variation>
    <location>
        <begin position="48"/>
        <end position="127"/>
    </location>
</feature>
<feature type="splice variant" id="VSP_034746" description="In isoform 2." evidence="6">
    <original>DISSKCMMKEFSS</original>
    <variation>ELSGECPLAAPAS</variation>
    <location>
        <begin position="48"/>
        <end position="60"/>
    </location>
</feature>
<feature type="splice variant" id="VSP_034747" description="In isoform 2." evidence="6">
    <location>
        <begin position="61"/>
        <end position="523"/>
    </location>
</feature>
<feature type="splice variant" id="VSP_055630" description="In isoform 3." evidence="7">
    <location>
        <begin position="128"/>
        <end position="523"/>
    </location>
</feature>
<feature type="sequence variant" id="VAR_045598" description="In dbSNP:rs10425136." evidence="4 5">
    <original>S</original>
    <variation>G</variation>
    <location>
        <position position="389"/>
    </location>
</feature>
<feature type="sequence conflict" description="In Ref. 1; BAG57279." evidence="7" ref="1">
    <original>T</original>
    <variation>A</variation>
    <location>
        <position position="61"/>
    </location>
</feature>
<feature type="sequence conflict" description="In Ref. 1; BAG57279." evidence="7" ref="1">
    <original>Q</original>
    <variation>R</variation>
    <location>
        <position position="100"/>
    </location>
</feature>
<feature type="sequence conflict" description="In Ref. 1; BAG57279." evidence="7" ref="1">
    <original>K</original>
    <variation>N</variation>
    <location>
        <position position="241"/>
    </location>
</feature>
<feature type="sequence conflict" description="In Ref. 1; BAG57279." evidence="7" ref="1">
    <original>K</original>
    <variation>E</variation>
    <location>
        <position position="297"/>
    </location>
</feature>
<feature type="sequence conflict" description="In Ref. 1; BAG57279." evidence="7" ref="1">
    <original>P</original>
    <variation>L</variation>
    <location>
        <position position="382"/>
    </location>
</feature>
<feature type="sequence conflict" description="In Ref. 1; BAH14671." evidence="7" ref="1">
    <original>Y</original>
    <variation>N</variation>
    <location>
        <position position="494"/>
    </location>
</feature>
<protein>
    <recommendedName>
        <fullName>Zinc finger protein 765</fullName>
    </recommendedName>
</protein>
<keyword id="KW-0025">Alternative splicing</keyword>
<keyword id="KW-0238">DNA-binding</keyword>
<keyword id="KW-1017">Isopeptide bond</keyword>
<keyword id="KW-0479">Metal-binding</keyword>
<keyword id="KW-0539">Nucleus</keyword>
<keyword id="KW-1267">Proteomics identification</keyword>
<keyword id="KW-1185">Reference proteome</keyword>
<keyword id="KW-0677">Repeat</keyword>
<keyword id="KW-0804">Transcription</keyword>
<keyword id="KW-0805">Transcription regulation</keyword>
<keyword id="KW-0832">Ubl conjugation</keyword>
<keyword id="KW-0862">Zinc</keyword>
<keyword id="KW-0863">Zinc-finger</keyword>
<proteinExistence type="evidence at protein level"/>
<evidence type="ECO:0000250" key="1"/>
<evidence type="ECO:0000255" key="2">
    <source>
        <dbReference type="PROSITE-ProRule" id="PRU00042"/>
    </source>
</evidence>
<evidence type="ECO:0000255" key="3">
    <source>
        <dbReference type="PROSITE-ProRule" id="PRU00119"/>
    </source>
</evidence>
<evidence type="ECO:0000269" key="4">
    <source>
    </source>
</evidence>
<evidence type="ECO:0000269" key="5">
    <source>
    </source>
</evidence>
<evidence type="ECO:0000303" key="6">
    <source>
    </source>
</evidence>
<evidence type="ECO:0000305" key="7"/>
<evidence type="ECO:0007744" key="8">
    <source>
    </source>
</evidence>
<accession>Q7L2R6</accession>
<accession>A8MYG0</accession>
<accession>B4DF18</accession>
<accession>B7ZAI5</accession>
<accession>B9EIL1</accession>
<accession>Q9BV49</accession>
<dbReference type="EMBL" id="AK293890">
    <property type="protein sequence ID" value="BAG57279.1"/>
    <property type="molecule type" value="mRNA"/>
</dbReference>
<dbReference type="EMBL" id="AK316300">
    <property type="protein sequence ID" value="BAH14671.1"/>
    <property type="molecule type" value="mRNA"/>
</dbReference>
<dbReference type="EMBL" id="AC022137">
    <property type="status" value="NOT_ANNOTATED_CDS"/>
    <property type="molecule type" value="Genomic_DNA"/>
</dbReference>
<dbReference type="EMBL" id="CH471135">
    <property type="protein sequence ID" value="EAW72134.1"/>
    <property type="molecule type" value="Genomic_DNA"/>
</dbReference>
<dbReference type="EMBL" id="BC001610">
    <property type="status" value="NOT_ANNOTATED_CDS"/>
    <property type="molecule type" value="mRNA"/>
</dbReference>
<dbReference type="EMBL" id="BC017357">
    <property type="status" value="NOT_ANNOTATED_CDS"/>
    <property type="molecule type" value="mRNA"/>
</dbReference>
<dbReference type="EMBL" id="BC140724">
    <property type="protein sequence ID" value="AAI40725.1"/>
    <property type="molecule type" value="mRNA"/>
</dbReference>
<dbReference type="CCDS" id="CCDS46171.1">
    <molecule id="Q7L2R6-1"/>
</dbReference>
<dbReference type="RefSeq" id="NP_001035275.1">
    <molecule id="Q7L2R6-1"/>
    <property type="nucleotide sequence ID" value="NM_001040185.3"/>
</dbReference>
<dbReference type="SMR" id="Q7L2R6"/>
<dbReference type="BioGRID" id="124860">
    <property type="interactions" value="25"/>
</dbReference>
<dbReference type="FunCoup" id="Q7L2R6">
    <property type="interactions" value="114"/>
</dbReference>
<dbReference type="IntAct" id="Q7L2R6">
    <property type="interactions" value="41"/>
</dbReference>
<dbReference type="MINT" id="Q7L2R6"/>
<dbReference type="STRING" id="9606.ENSP00000379689"/>
<dbReference type="GlyGen" id="Q7L2R6">
    <property type="glycosylation" value="1 site, 1 O-linked glycan (1 site)"/>
</dbReference>
<dbReference type="iPTMnet" id="Q7L2R6"/>
<dbReference type="PhosphoSitePlus" id="Q7L2R6"/>
<dbReference type="BioMuta" id="ZNF765"/>
<dbReference type="DMDM" id="205639967"/>
<dbReference type="jPOST" id="Q7L2R6"/>
<dbReference type="MassIVE" id="Q7L2R6"/>
<dbReference type="PaxDb" id="9606-ENSP00000379689"/>
<dbReference type="PeptideAtlas" id="Q7L2R6"/>
<dbReference type="ProteomicsDB" id="68766">
    <molecule id="Q7L2R6-1"/>
</dbReference>
<dbReference type="ProteomicsDB" id="68767">
    <molecule id="Q7L2R6-2"/>
</dbReference>
<dbReference type="Pumba" id="Q7L2R6"/>
<dbReference type="TopDownProteomics" id="Q7L2R6-2">
    <molecule id="Q7L2R6-2"/>
</dbReference>
<dbReference type="Antibodypedia" id="32701">
    <property type="antibodies" value="65 antibodies from 13 providers"/>
</dbReference>
<dbReference type="DNASU" id="91661"/>
<dbReference type="Ensembl" id="ENST00000396408.8">
    <molecule id="Q7L2R6-1"/>
    <property type="protein sequence ID" value="ENSP00000379689.3"/>
    <property type="gene ID" value="ENSG00000196417.13"/>
</dbReference>
<dbReference type="Ensembl" id="ENST00000504235.5">
    <molecule id="Q7L2R6-2"/>
    <property type="protein sequence ID" value="ENSP00000424395.1"/>
    <property type="gene ID" value="ENSG00000196417.13"/>
</dbReference>
<dbReference type="Ensembl" id="ENST00000594030.2">
    <molecule id="Q7L2R6-2"/>
    <property type="protein sequence ID" value="ENSP00000470468.1"/>
    <property type="gene ID" value="ENSG00000196417.13"/>
</dbReference>
<dbReference type="GeneID" id="91661"/>
<dbReference type="KEGG" id="hsa:91661"/>
<dbReference type="MANE-Select" id="ENST00000396408.8">
    <property type="protein sequence ID" value="ENSP00000379689.3"/>
    <property type="RefSeq nucleotide sequence ID" value="NM_001040185.3"/>
    <property type="RefSeq protein sequence ID" value="NP_001035275.1"/>
</dbReference>
<dbReference type="UCSC" id="uc002qbm.4">
    <molecule id="Q7L2R6-1"/>
    <property type="organism name" value="human"/>
</dbReference>
<dbReference type="AGR" id="HGNC:25092"/>
<dbReference type="CTD" id="91661"/>
<dbReference type="GeneCards" id="ZNF765"/>
<dbReference type="HGNC" id="HGNC:25092">
    <property type="gene designation" value="ZNF765"/>
</dbReference>
<dbReference type="HPA" id="ENSG00000196417">
    <property type="expression patterns" value="Low tissue specificity"/>
</dbReference>
<dbReference type="neXtProt" id="NX_Q7L2R6"/>
<dbReference type="OpenTargets" id="ENSG00000196417"/>
<dbReference type="OpenTargets" id="ENSG00000204604"/>
<dbReference type="PharmGKB" id="PA162410312"/>
<dbReference type="VEuPathDB" id="HostDB:ENSG00000196417"/>
<dbReference type="eggNOG" id="KOG1721">
    <property type="taxonomic scope" value="Eukaryota"/>
</dbReference>
<dbReference type="GeneTree" id="ENSGT00940000154397"/>
<dbReference type="HOGENOM" id="CLU_002678_69_15_1"/>
<dbReference type="InParanoid" id="Q7L2R6"/>
<dbReference type="OMA" id="SGKAYNC"/>
<dbReference type="OrthoDB" id="6077919at2759"/>
<dbReference type="PAN-GO" id="Q7L2R6">
    <property type="GO annotations" value="4 GO annotations based on evolutionary models"/>
</dbReference>
<dbReference type="PhylomeDB" id="Q7L2R6"/>
<dbReference type="TreeFam" id="TF341892"/>
<dbReference type="PathwayCommons" id="Q7L2R6"/>
<dbReference type="Reactome" id="R-HSA-9843940">
    <property type="pathway name" value="Regulation of endogenous retroelements by KRAB-ZFP proteins"/>
</dbReference>
<dbReference type="SignaLink" id="Q7L2R6"/>
<dbReference type="BioGRID-ORCS" id="91661">
    <property type="hits" value="12 hits in 1105 CRISPR screens"/>
</dbReference>
<dbReference type="GenomeRNAi" id="91661"/>
<dbReference type="Pharos" id="Q7L2R6">
    <property type="development level" value="Tdark"/>
</dbReference>
<dbReference type="PRO" id="PR:Q7L2R6"/>
<dbReference type="Proteomes" id="UP000005640">
    <property type="component" value="Chromosome 19"/>
</dbReference>
<dbReference type="RNAct" id="Q7L2R6">
    <property type="molecule type" value="protein"/>
</dbReference>
<dbReference type="Bgee" id="ENSG00000196417">
    <property type="expression patterns" value="Expressed in oocyte and 185 other cell types or tissues"/>
</dbReference>
<dbReference type="ExpressionAtlas" id="Q7L2R6">
    <property type="expression patterns" value="baseline and differential"/>
</dbReference>
<dbReference type="GO" id="GO:0005634">
    <property type="term" value="C:nucleus"/>
    <property type="evidence" value="ECO:0000318"/>
    <property type="project" value="GO_Central"/>
</dbReference>
<dbReference type="GO" id="GO:0000981">
    <property type="term" value="F:DNA-binding transcription factor activity, RNA polymerase II-specific"/>
    <property type="evidence" value="ECO:0000318"/>
    <property type="project" value="GO_Central"/>
</dbReference>
<dbReference type="GO" id="GO:0000978">
    <property type="term" value="F:RNA polymerase II cis-regulatory region sequence-specific DNA binding"/>
    <property type="evidence" value="ECO:0000318"/>
    <property type="project" value="GO_Central"/>
</dbReference>
<dbReference type="GO" id="GO:0008270">
    <property type="term" value="F:zinc ion binding"/>
    <property type="evidence" value="ECO:0007669"/>
    <property type="project" value="UniProtKB-KW"/>
</dbReference>
<dbReference type="GO" id="GO:0006357">
    <property type="term" value="P:regulation of transcription by RNA polymerase II"/>
    <property type="evidence" value="ECO:0000318"/>
    <property type="project" value="GO_Central"/>
</dbReference>
<dbReference type="CDD" id="cd07765">
    <property type="entry name" value="KRAB_A-box"/>
    <property type="match status" value="1"/>
</dbReference>
<dbReference type="FunFam" id="3.30.160.60:FF:004137">
    <property type="match status" value="1"/>
</dbReference>
<dbReference type="FunFam" id="3.30.160.60:FF:000745">
    <property type="entry name" value="zinc finger protein 181 isoform X1"/>
    <property type="match status" value="2"/>
</dbReference>
<dbReference type="FunFam" id="3.30.160.60:FF:002343">
    <property type="entry name" value="Zinc finger protein 33A"/>
    <property type="match status" value="1"/>
</dbReference>
<dbReference type="FunFam" id="3.30.160.60:FF:002402">
    <property type="entry name" value="Zinc finger protein 347"/>
    <property type="match status" value="1"/>
</dbReference>
<dbReference type="FunFam" id="3.30.160.60:FF:002090">
    <property type="entry name" value="Zinc finger protein 473"/>
    <property type="match status" value="2"/>
</dbReference>
<dbReference type="FunFam" id="3.30.160.60:FF:000176">
    <property type="entry name" value="zinc finger protein 70"/>
    <property type="match status" value="1"/>
</dbReference>
<dbReference type="FunFam" id="3.30.160.60:FF:002289">
    <property type="entry name" value="Zinc finger protein 813"/>
    <property type="match status" value="1"/>
</dbReference>
<dbReference type="FunFam" id="3.30.160.60:FF:002292">
    <property type="entry name" value="Zinc finger protein 816"/>
    <property type="match status" value="1"/>
</dbReference>
<dbReference type="FunFam" id="3.30.160.60:FF:000028">
    <property type="entry name" value="zinc finger protein 90 homolog"/>
    <property type="match status" value="2"/>
</dbReference>
<dbReference type="Gene3D" id="6.10.140.140">
    <property type="match status" value="1"/>
</dbReference>
<dbReference type="Gene3D" id="3.30.160.60">
    <property type="entry name" value="Classic Zinc Finger"/>
    <property type="match status" value="11"/>
</dbReference>
<dbReference type="InterPro" id="IPR001909">
    <property type="entry name" value="KRAB"/>
</dbReference>
<dbReference type="InterPro" id="IPR036051">
    <property type="entry name" value="KRAB_dom_sf"/>
</dbReference>
<dbReference type="InterPro" id="IPR050758">
    <property type="entry name" value="Znf_C2H2-type"/>
</dbReference>
<dbReference type="InterPro" id="IPR036236">
    <property type="entry name" value="Znf_C2H2_sf"/>
</dbReference>
<dbReference type="InterPro" id="IPR013087">
    <property type="entry name" value="Znf_C2H2_type"/>
</dbReference>
<dbReference type="PANTHER" id="PTHR23234:SF10">
    <property type="entry name" value="RIKEN CDNA 6720489N17 GENE-RELATED"/>
    <property type="match status" value="1"/>
</dbReference>
<dbReference type="PANTHER" id="PTHR23234">
    <property type="entry name" value="ZNF44 PROTEIN"/>
    <property type="match status" value="1"/>
</dbReference>
<dbReference type="Pfam" id="PF01352">
    <property type="entry name" value="KRAB"/>
    <property type="match status" value="1"/>
</dbReference>
<dbReference type="Pfam" id="PF00096">
    <property type="entry name" value="zf-C2H2"/>
    <property type="match status" value="9"/>
</dbReference>
<dbReference type="SMART" id="SM00349">
    <property type="entry name" value="KRAB"/>
    <property type="match status" value="1"/>
</dbReference>
<dbReference type="SMART" id="SM00355">
    <property type="entry name" value="ZnF_C2H2"/>
    <property type="match status" value="11"/>
</dbReference>
<dbReference type="SUPFAM" id="SSF57667">
    <property type="entry name" value="beta-beta-alpha zinc fingers"/>
    <property type="match status" value="6"/>
</dbReference>
<dbReference type="SUPFAM" id="SSF109640">
    <property type="entry name" value="KRAB domain (Kruppel-associated box)"/>
    <property type="match status" value="1"/>
</dbReference>
<dbReference type="PROSITE" id="PS50805">
    <property type="entry name" value="KRAB"/>
    <property type="match status" value="1"/>
</dbReference>
<dbReference type="PROSITE" id="PS00028">
    <property type="entry name" value="ZINC_FINGER_C2H2_1"/>
    <property type="match status" value="8"/>
</dbReference>
<dbReference type="PROSITE" id="PS50157">
    <property type="entry name" value="ZINC_FINGER_C2H2_2"/>
    <property type="match status" value="11"/>
</dbReference>
<sequence>MALPQGLLTFRDVAIEFSQEEWKCLDPAQRTLYRDVMLENYRNLVSLDISSKCMMKEFSSTAQGNREVFHAGTSQRHESHHNGDFCFQDIDKDIHDIEFQWQEDERNGHEALMTKIKKLTGSTERYDQNYAGNKPVKYQLGFSFHSHLPELHIFHTEEKIDNQVVKSIHDASLVSTAQRISCRPETHISNDYGNNFLNSSLFTQKQEVHMREKSFQCNDSGKAYNCSSLLRKHQLIHLGEKQYKCDICGKVFNSKRYVARHRRCHTGEKPYKCNECGKTFSQTYYLTCHRRLHTGEKPYKCEECDKAFHFKSKLQIHRRIHTGEKPYKCNECGKTFSQKSYLTCHRRLHTGEKPYKCNECGKTFSRKSHFTCHHRVHTGEKPYKCNECSKTFSHKSSLTYHRRLHTEEKPYKCNECGKTFNQQLTLNICRLHSGEKPYKCEECDKAYSFKSNLEIHQKIHTEENPYKCNECGKTFSRTSSLTYHHRLHTGQKPYKCEDCDEAFSFKSNLERHRRIYTGEKLHV</sequence>
<reference key="1">
    <citation type="journal article" date="2004" name="Nat. Genet.">
        <title>Complete sequencing and characterization of 21,243 full-length human cDNAs.</title>
        <authorList>
            <person name="Ota T."/>
            <person name="Suzuki Y."/>
            <person name="Nishikawa T."/>
            <person name="Otsuki T."/>
            <person name="Sugiyama T."/>
            <person name="Irie R."/>
            <person name="Wakamatsu A."/>
            <person name="Hayashi K."/>
            <person name="Sato H."/>
            <person name="Nagai K."/>
            <person name="Kimura K."/>
            <person name="Makita H."/>
            <person name="Sekine M."/>
            <person name="Obayashi M."/>
            <person name="Nishi T."/>
            <person name="Shibahara T."/>
            <person name="Tanaka T."/>
            <person name="Ishii S."/>
            <person name="Yamamoto J."/>
            <person name="Saito K."/>
            <person name="Kawai Y."/>
            <person name="Isono Y."/>
            <person name="Nakamura Y."/>
            <person name="Nagahari K."/>
            <person name="Murakami K."/>
            <person name="Yasuda T."/>
            <person name="Iwayanagi T."/>
            <person name="Wagatsuma M."/>
            <person name="Shiratori A."/>
            <person name="Sudo H."/>
            <person name="Hosoiri T."/>
            <person name="Kaku Y."/>
            <person name="Kodaira H."/>
            <person name="Kondo H."/>
            <person name="Sugawara M."/>
            <person name="Takahashi M."/>
            <person name="Kanda K."/>
            <person name="Yokoi T."/>
            <person name="Furuya T."/>
            <person name="Kikkawa E."/>
            <person name="Omura Y."/>
            <person name="Abe K."/>
            <person name="Kamihara K."/>
            <person name="Katsuta N."/>
            <person name="Sato K."/>
            <person name="Tanikawa M."/>
            <person name="Yamazaki M."/>
            <person name="Ninomiya K."/>
            <person name="Ishibashi T."/>
            <person name="Yamashita H."/>
            <person name="Murakawa K."/>
            <person name="Fujimori K."/>
            <person name="Tanai H."/>
            <person name="Kimata M."/>
            <person name="Watanabe M."/>
            <person name="Hiraoka S."/>
            <person name="Chiba Y."/>
            <person name="Ishida S."/>
            <person name="Ono Y."/>
            <person name="Takiguchi S."/>
            <person name="Watanabe S."/>
            <person name="Yosida M."/>
            <person name="Hotuta T."/>
            <person name="Kusano J."/>
            <person name="Kanehori K."/>
            <person name="Takahashi-Fujii A."/>
            <person name="Hara H."/>
            <person name="Tanase T.-O."/>
            <person name="Nomura Y."/>
            <person name="Togiya S."/>
            <person name="Komai F."/>
            <person name="Hara R."/>
            <person name="Takeuchi K."/>
            <person name="Arita M."/>
            <person name="Imose N."/>
            <person name="Musashino K."/>
            <person name="Yuuki H."/>
            <person name="Oshima A."/>
            <person name="Sasaki N."/>
            <person name="Aotsuka S."/>
            <person name="Yoshikawa Y."/>
            <person name="Matsunawa H."/>
            <person name="Ichihara T."/>
            <person name="Shiohata N."/>
            <person name="Sano S."/>
            <person name="Moriya S."/>
            <person name="Momiyama H."/>
            <person name="Satoh N."/>
            <person name="Takami S."/>
            <person name="Terashima Y."/>
            <person name="Suzuki O."/>
            <person name="Nakagawa S."/>
            <person name="Senoh A."/>
            <person name="Mizoguchi H."/>
            <person name="Goto Y."/>
            <person name="Shimizu F."/>
            <person name="Wakebe H."/>
            <person name="Hishigaki H."/>
            <person name="Watanabe T."/>
            <person name="Sugiyama A."/>
            <person name="Takemoto M."/>
            <person name="Kawakami B."/>
            <person name="Yamazaki M."/>
            <person name="Watanabe K."/>
            <person name="Kumagai A."/>
            <person name="Itakura S."/>
            <person name="Fukuzumi Y."/>
            <person name="Fujimori Y."/>
            <person name="Komiyama M."/>
            <person name="Tashiro H."/>
            <person name="Tanigami A."/>
            <person name="Fujiwara T."/>
            <person name="Ono T."/>
            <person name="Yamada K."/>
            <person name="Fujii Y."/>
            <person name="Ozaki K."/>
            <person name="Hirao M."/>
            <person name="Ohmori Y."/>
            <person name="Kawabata A."/>
            <person name="Hikiji T."/>
            <person name="Kobatake N."/>
            <person name="Inagaki H."/>
            <person name="Ikema Y."/>
            <person name="Okamoto S."/>
            <person name="Okitani R."/>
            <person name="Kawakami T."/>
            <person name="Noguchi S."/>
            <person name="Itoh T."/>
            <person name="Shigeta K."/>
            <person name="Senba T."/>
            <person name="Matsumura K."/>
            <person name="Nakajima Y."/>
            <person name="Mizuno T."/>
            <person name="Morinaga M."/>
            <person name="Sasaki M."/>
            <person name="Togashi T."/>
            <person name="Oyama M."/>
            <person name="Hata H."/>
            <person name="Watanabe M."/>
            <person name="Komatsu T."/>
            <person name="Mizushima-Sugano J."/>
            <person name="Satoh T."/>
            <person name="Shirai Y."/>
            <person name="Takahashi Y."/>
            <person name="Nakagawa K."/>
            <person name="Okumura K."/>
            <person name="Nagase T."/>
            <person name="Nomura N."/>
            <person name="Kikuchi H."/>
            <person name="Masuho Y."/>
            <person name="Yamashita R."/>
            <person name="Nakai K."/>
            <person name="Yada T."/>
            <person name="Nakamura Y."/>
            <person name="Ohara O."/>
            <person name="Isogai T."/>
            <person name="Sugano S."/>
        </authorList>
    </citation>
    <scope>NUCLEOTIDE SEQUENCE [LARGE SCALE MRNA] (ISOFORM 1)</scope>
    <scope>VARIANT GLY-389</scope>
    <source>
        <tissue>Cerebellum</tissue>
        <tissue>Placenta</tissue>
    </source>
</reference>
<reference key="2">
    <citation type="journal article" date="2004" name="Nature">
        <title>The DNA sequence and biology of human chromosome 19.</title>
        <authorList>
            <person name="Grimwood J."/>
            <person name="Gordon L.A."/>
            <person name="Olsen A.S."/>
            <person name="Terry A."/>
            <person name="Schmutz J."/>
            <person name="Lamerdin J.E."/>
            <person name="Hellsten U."/>
            <person name="Goodstein D."/>
            <person name="Couronne O."/>
            <person name="Tran-Gyamfi M."/>
            <person name="Aerts A."/>
            <person name="Altherr M."/>
            <person name="Ashworth L."/>
            <person name="Bajorek E."/>
            <person name="Black S."/>
            <person name="Branscomb E."/>
            <person name="Caenepeel S."/>
            <person name="Carrano A.V."/>
            <person name="Caoile C."/>
            <person name="Chan Y.M."/>
            <person name="Christensen M."/>
            <person name="Cleland C.A."/>
            <person name="Copeland A."/>
            <person name="Dalin E."/>
            <person name="Dehal P."/>
            <person name="Denys M."/>
            <person name="Detter J.C."/>
            <person name="Escobar J."/>
            <person name="Flowers D."/>
            <person name="Fotopulos D."/>
            <person name="Garcia C."/>
            <person name="Georgescu A.M."/>
            <person name="Glavina T."/>
            <person name="Gomez M."/>
            <person name="Gonzales E."/>
            <person name="Groza M."/>
            <person name="Hammon N."/>
            <person name="Hawkins T."/>
            <person name="Haydu L."/>
            <person name="Ho I."/>
            <person name="Huang W."/>
            <person name="Israni S."/>
            <person name="Jett J."/>
            <person name="Kadner K."/>
            <person name="Kimball H."/>
            <person name="Kobayashi A."/>
            <person name="Larionov V."/>
            <person name="Leem S.-H."/>
            <person name="Lopez F."/>
            <person name="Lou Y."/>
            <person name="Lowry S."/>
            <person name="Malfatti S."/>
            <person name="Martinez D."/>
            <person name="McCready P.M."/>
            <person name="Medina C."/>
            <person name="Morgan J."/>
            <person name="Nelson K."/>
            <person name="Nolan M."/>
            <person name="Ovcharenko I."/>
            <person name="Pitluck S."/>
            <person name="Pollard M."/>
            <person name="Popkie A.P."/>
            <person name="Predki P."/>
            <person name="Quan G."/>
            <person name="Ramirez L."/>
            <person name="Rash S."/>
            <person name="Retterer J."/>
            <person name="Rodriguez A."/>
            <person name="Rogers S."/>
            <person name="Salamov A."/>
            <person name="Salazar A."/>
            <person name="She X."/>
            <person name="Smith D."/>
            <person name="Slezak T."/>
            <person name="Solovyev V."/>
            <person name="Thayer N."/>
            <person name="Tice H."/>
            <person name="Tsai M."/>
            <person name="Ustaszewska A."/>
            <person name="Vo N."/>
            <person name="Wagner M."/>
            <person name="Wheeler J."/>
            <person name="Wu K."/>
            <person name="Xie G."/>
            <person name="Yang J."/>
            <person name="Dubchak I."/>
            <person name="Furey T.S."/>
            <person name="DeJong P."/>
            <person name="Dickson M."/>
            <person name="Gordon D."/>
            <person name="Eichler E.E."/>
            <person name="Pennacchio L.A."/>
            <person name="Richardson P."/>
            <person name="Stubbs L."/>
            <person name="Rokhsar D.S."/>
            <person name="Myers R.M."/>
            <person name="Rubin E.M."/>
            <person name="Lucas S.M."/>
        </authorList>
    </citation>
    <scope>NUCLEOTIDE SEQUENCE [LARGE SCALE GENOMIC DNA]</scope>
</reference>
<reference key="3">
    <citation type="submission" date="2005-07" db="EMBL/GenBank/DDBJ databases">
        <authorList>
            <person name="Mural R.J."/>
            <person name="Istrail S."/>
            <person name="Sutton G.G."/>
            <person name="Florea L."/>
            <person name="Halpern A.L."/>
            <person name="Mobarry C.M."/>
            <person name="Lippert R."/>
            <person name="Walenz B."/>
            <person name="Shatkay H."/>
            <person name="Dew I."/>
            <person name="Miller J.R."/>
            <person name="Flanigan M.J."/>
            <person name="Edwards N.J."/>
            <person name="Bolanos R."/>
            <person name="Fasulo D."/>
            <person name="Halldorsson B.V."/>
            <person name="Hannenhalli S."/>
            <person name="Turner R."/>
            <person name="Yooseph S."/>
            <person name="Lu F."/>
            <person name="Nusskern D.R."/>
            <person name="Shue B.C."/>
            <person name="Zheng X.H."/>
            <person name="Zhong F."/>
            <person name="Delcher A.L."/>
            <person name="Huson D.H."/>
            <person name="Kravitz S.A."/>
            <person name="Mouchard L."/>
            <person name="Reinert K."/>
            <person name="Remington K.A."/>
            <person name="Clark A.G."/>
            <person name="Waterman M.S."/>
            <person name="Eichler E.E."/>
            <person name="Adams M.D."/>
            <person name="Hunkapiller M.W."/>
            <person name="Myers E.W."/>
            <person name="Venter J.C."/>
        </authorList>
    </citation>
    <scope>NUCLEOTIDE SEQUENCE [LARGE SCALE GENOMIC DNA]</scope>
</reference>
<reference key="4">
    <citation type="journal article" date="2004" name="Genome Res.">
        <title>The status, quality, and expansion of the NIH full-length cDNA project: the Mammalian Gene Collection (MGC).</title>
        <authorList>
            <consortium name="The MGC Project Team"/>
        </authorList>
    </citation>
    <scope>NUCLEOTIDE SEQUENCE [LARGE SCALE MRNA] (ISOFORMS 1 AND 2)</scope>
    <scope>VARIANT GLY-389</scope>
    <source>
        <tissue>Lymph</tissue>
    </source>
</reference>
<reference key="5">
    <citation type="journal article" date="2017" name="Nat. Struct. Mol. Biol.">
        <title>Site-specific mapping of the human SUMO proteome reveals co-modification with phosphorylation.</title>
        <authorList>
            <person name="Hendriks I.A."/>
            <person name="Lyon D."/>
            <person name="Young C."/>
            <person name="Jensen L.J."/>
            <person name="Vertegaal A.C."/>
            <person name="Nielsen M.L."/>
        </authorList>
    </citation>
    <scope>SUMOYLATION [LARGE SCALE ANALYSIS] AT LYS-205</scope>
    <scope>IDENTIFICATION BY MASS SPECTROMETRY [LARGE SCALE ANALYSIS]</scope>
</reference>
<gene>
    <name type="primary">ZNF765</name>
</gene>
<comment type="function">
    <text evidence="1">May be involved in transcriptional regulation.</text>
</comment>
<comment type="interaction">
    <interactant intactId="EBI-9676069">
        <id>Q7L2R6</id>
    </interactant>
    <interactant intactId="EBI-948630">
        <id>Q86Y13</id>
        <label>DZIP3</label>
    </interactant>
    <organismsDiffer>false</organismsDiffer>
    <experiments>3</experiments>
</comment>
<comment type="interaction">
    <interactant intactId="EBI-9676069">
        <id>Q7L2R6</id>
    </interactant>
    <interactant intactId="EBI-286735">
        <id>O95373</id>
        <label>IPO7</label>
    </interactant>
    <organismsDiffer>false</organismsDiffer>
    <experiments>2</experiments>
</comment>
<comment type="interaction">
    <interactant intactId="EBI-9676069">
        <id>Q7L2R6</id>
    </interactant>
    <interactant intactId="EBI-307352">
        <id>Q04864</id>
        <label>REL</label>
    </interactant>
    <organismsDiffer>false</organismsDiffer>
    <experiments>3</experiments>
</comment>
<comment type="interaction">
    <interactant intactId="EBI-9676069">
        <id>Q7L2R6</id>
    </interactant>
    <interactant intactId="EBI-78139">
        <id>Q13263</id>
        <label>TRIM28</label>
    </interactant>
    <organismsDiffer>false</organismsDiffer>
    <experiments>3</experiments>
</comment>
<comment type="interaction">
    <interactant intactId="EBI-9676069">
        <id>Q7L2R6</id>
    </interactant>
    <interactant intactId="EBI-739895">
        <id>Q8N6Y0</id>
        <label>USHBP1</label>
    </interactant>
    <organismsDiffer>false</organismsDiffer>
    <experiments>3</experiments>
</comment>
<comment type="interaction">
    <interactant intactId="EBI-12834294">
        <id>Q7L2R6-2</id>
    </interactant>
    <interactant intactId="EBI-948603">
        <id>Q03989</id>
        <label>ARID5A</label>
    </interactant>
    <organismsDiffer>false</organismsDiffer>
    <experiments>3</experiments>
</comment>
<comment type="interaction">
    <interactant intactId="EBI-12834294">
        <id>Q7L2R6-2</id>
    </interactant>
    <interactant intactId="EBI-953896">
        <id>Q9NP55</id>
        <label>BPIFA1</label>
    </interactant>
    <organismsDiffer>false</organismsDiffer>
    <experiments>3</experiments>
</comment>
<comment type="interaction">
    <interactant intactId="EBI-12834294">
        <id>Q7L2R6-2</id>
    </interactant>
    <interactant intactId="EBI-10250303">
        <id>Q6IPU0</id>
        <label>CENPP</label>
    </interactant>
    <organismsDiffer>false</organismsDiffer>
    <experiments>3</experiments>
</comment>
<comment type="interaction">
    <interactant intactId="EBI-12834294">
        <id>Q7L2R6-2</id>
    </interactant>
    <interactant intactId="EBI-742054">
        <id>Q96D03</id>
        <label>DDIT4L</label>
    </interactant>
    <organismsDiffer>false</organismsDiffer>
    <experiments>3</experiments>
</comment>
<comment type="interaction">
    <interactant intactId="EBI-12834294">
        <id>Q7L2R6-2</id>
    </interactant>
    <interactant intactId="EBI-6509505">
        <id>Q0VD86</id>
        <label>INCA1</label>
    </interactant>
    <organismsDiffer>false</organismsDiffer>
    <experiments>3</experiments>
</comment>
<comment type="interaction">
    <interactant intactId="EBI-12834294">
        <id>Q7L2R6-2</id>
    </interactant>
    <interactant intactId="EBI-11987923">
        <id>P59942</id>
        <label>MCCD1</label>
    </interactant>
    <organismsDiffer>false</organismsDiffer>
    <experiments>3</experiments>
</comment>
<comment type="interaction">
    <interactant intactId="EBI-12834294">
        <id>Q7L2R6-2</id>
    </interactant>
    <interactant intactId="EBI-9087860">
        <id>P32243-2</id>
        <label>OTX2</label>
    </interactant>
    <organismsDiffer>false</organismsDiffer>
    <experiments>3</experiments>
</comment>
<comment type="interaction">
    <interactant intactId="EBI-12834294">
        <id>Q7L2R6-2</id>
    </interactant>
    <interactant intactId="EBI-6257312">
        <id>Q9BVN2</id>
        <label>RUSC1</label>
    </interactant>
    <organismsDiffer>false</organismsDiffer>
    <experiments>3</experiments>
</comment>
<comment type="interaction">
    <interactant intactId="EBI-12834294">
        <id>Q7L2R6-2</id>
    </interactant>
    <interactant intactId="EBI-12806590">
        <id>Q86WV8</id>
        <label>TSC1</label>
    </interactant>
    <organismsDiffer>false</organismsDiffer>
    <experiments>3</experiments>
</comment>
<comment type="interaction">
    <interactant intactId="EBI-12834294">
        <id>Q7L2R6-2</id>
    </interactant>
    <interactant intactId="EBI-1054584">
        <id>Q9BRT2</id>
        <label>UQCC2</label>
    </interactant>
    <organismsDiffer>false</organismsDiffer>
    <experiments>3</experiments>
</comment>
<comment type="interaction">
    <interactant intactId="EBI-12834294">
        <id>Q7L2R6-2</id>
    </interactant>
    <interactant intactId="EBI-745520">
        <id>Q9P0T4</id>
        <label>ZNF581</label>
    </interactant>
    <organismsDiffer>false</organismsDiffer>
    <experiments>3</experiments>
</comment>
<comment type="subcellular location">
    <subcellularLocation>
        <location evidence="1">Nucleus</location>
    </subcellularLocation>
</comment>
<comment type="alternative products">
    <event type="alternative splicing"/>
    <isoform>
        <id>Q7L2R6-1</id>
        <name>1</name>
        <sequence type="displayed"/>
    </isoform>
    <isoform>
        <id>Q7L2R6-2</id>
        <name>2</name>
        <sequence type="described" ref="VSP_034746 VSP_034747"/>
    </isoform>
    <isoform>
        <id>Q7L2R6-3</id>
        <name>3</name>
        <sequence type="described" ref="VSP_055629 VSP_055630"/>
    </isoform>
</comment>
<comment type="miscellaneous">
    <molecule>Isoform 2</molecule>
    <text evidence="7">May be produced at very low levels due to a premature stop codon in the mRNA, leading to nonsense-mediated mRNA decay.</text>
</comment>
<comment type="similarity">
    <text evidence="7">Belongs to the krueppel C2H2-type zinc-finger protein family.</text>
</comment>
<organism>
    <name type="scientific">Homo sapiens</name>
    <name type="common">Human</name>
    <dbReference type="NCBI Taxonomy" id="9606"/>
    <lineage>
        <taxon>Eukaryota</taxon>
        <taxon>Metazoa</taxon>
        <taxon>Chordata</taxon>
        <taxon>Craniata</taxon>
        <taxon>Vertebrata</taxon>
        <taxon>Euteleostomi</taxon>
        <taxon>Mammalia</taxon>
        <taxon>Eutheria</taxon>
        <taxon>Euarchontoglires</taxon>
        <taxon>Primates</taxon>
        <taxon>Haplorrhini</taxon>
        <taxon>Catarrhini</taxon>
        <taxon>Hominidae</taxon>
        <taxon>Homo</taxon>
    </lineage>
</organism>
<name>ZN765_HUMAN</name>